<sequence>MPRRRVVAKREILPDPKHGSQILAKFINHVMVSGKKSVAESIVYNALNTVAARAKTEEPMAIFEKALESIQPMVEVKSRRVGGATYQVPVEVRPARRAALSMRWLVDASRKRGEKSMALRLAGEILDAAENKGSAVKKREDVHRMAEANKAFSHYRF</sequence>
<feature type="chain" id="PRO_1000081287" description="Small ribosomal subunit protein uS7">
    <location>
        <begin position="1"/>
        <end position="157"/>
    </location>
</feature>
<protein>
    <recommendedName>
        <fullName evidence="1">Small ribosomal subunit protein uS7</fullName>
    </recommendedName>
    <alternativeName>
        <fullName evidence="2">30S ribosomal protein S7</fullName>
    </alternativeName>
</protein>
<accession>A6W396</accession>
<dbReference type="EMBL" id="CP000749">
    <property type="protein sequence ID" value="ABR73175.1"/>
    <property type="molecule type" value="Genomic_DNA"/>
</dbReference>
<dbReference type="SMR" id="A6W396"/>
<dbReference type="STRING" id="400668.Mmwyl1_4280"/>
<dbReference type="KEGG" id="mmw:Mmwyl1_4280"/>
<dbReference type="eggNOG" id="COG0049">
    <property type="taxonomic scope" value="Bacteria"/>
</dbReference>
<dbReference type="HOGENOM" id="CLU_072226_1_1_6"/>
<dbReference type="OrthoDB" id="9807653at2"/>
<dbReference type="GO" id="GO:0015935">
    <property type="term" value="C:small ribosomal subunit"/>
    <property type="evidence" value="ECO:0007669"/>
    <property type="project" value="InterPro"/>
</dbReference>
<dbReference type="GO" id="GO:0019843">
    <property type="term" value="F:rRNA binding"/>
    <property type="evidence" value="ECO:0007669"/>
    <property type="project" value="UniProtKB-UniRule"/>
</dbReference>
<dbReference type="GO" id="GO:0003735">
    <property type="term" value="F:structural constituent of ribosome"/>
    <property type="evidence" value="ECO:0007669"/>
    <property type="project" value="InterPro"/>
</dbReference>
<dbReference type="GO" id="GO:0000049">
    <property type="term" value="F:tRNA binding"/>
    <property type="evidence" value="ECO:0007669"/>
    <property type="project" value="UniProtKB-UniRule"/>
</dbReference>
<dbReference type="GO" id="GO:0006412">
    <property type="term" value="P:translation"/>
    <property type="evidence" value="ECO:0007669"/>
    <property type="project" value="UniProtKB-UniRule"/>
</dbReference>
<dbReference type="CDD" id="cd14869">
    <property type="entry name" value="uS7_Bacteria"/>
    <property type="match status" value="1"/>
</dbReference>
<dbReference type="FunFam" id="1.10.455.10:FF:000001">
    <property type="entry name" value="30S ribosomal protein S7"/>
    <property type="match status" value="1"/>
</dbReference>
<dbReference type="Gene3D" id="1.10.455.10">
    <property type="entry name" value="Ribosomal protein S7 domain"/>
    <property type="match status" value="1"/>
</dbReference>
<dbReference type="HAMAP" id="MF_00480_B">
    <property type="entry name" value="Ribosomal_uS7_B"/>
    <property type="match status" value="1"/>
</dbReference>
<dbReference type="InterPro" id="IPR000235">
    <property type="entry name" value="Ribosomal_uS7"/>
</dbReference>
<dbReference type="InterPro" id="IPR005717">
    <property type="entry name" value="Ribosomal_uS7_bac/org-type"/>
</dbReference>
<dbReference type="InterPro" id="IPR020606">
    <property type="entry name" value="Ribosomal_uS7_CS"/>
</dbReference>
<dbReference type="InterPro" id="IPR023798">
    <property type="entry name" value="Ribosomal_uS7_dom"/>
</dbReference>
<dbReference type="InterPro" id="IPR036823">
    <property type="entry name" value="Ribosomal_uS7_dom_sf"/>
</dbReference>
<dbReference type="NCBIfam" id="TIGR01029">
    <property type="entry name" value="rpsG_bact"/>
    <property type="match status" value="1"/>
</dbReference>
<dbReference type="PANTHER" id="PTHR11205">
    <property type="entry name" value="RIBOSOMAL PROTEIN S7"/>
    <property type="match status" value="1"/>
</dbReference>
<dbReference type="Pfam" id="PF00177">
    <property type="entry name" value="Ribosomal_S7"/>
    <property type="match status" value="1"/>
</dbReference>
<dbReference type="PIRSF" id="PIRSF002122">
    <property type="entry name" value="RPS7p_RPS7a_RPS5e_RPS7o"/>
    <property type="match status" value="1"/>
</dbReference>
<dbReference type="SUPFAM" id="SSF47973">
    <property type="entry name" value="Ribosomal protein S7"/>
    <property type="match status" value="1"/>
</dbReference>
<dbReference type="PROSITE" id="PS00052">
    <property type="entry name" value="RIBOSOMAL_S7"/>
    <property type="match status" value="1"/>
</dbReference>
<organism>
    <name type="scientific">Marinomonas sp. (strain MWYL1)</name>
    <dbReference type="NCBI Taxonomy" id="400668"/>
    <lineage>
        <taxon>Bacteria</taxon>
        <taxon>Pseudomonadati</taxon>
        <taxon>Pseudomonadota</taxon>
        <taxon>Gammaproteobacteria</taxon>
        <taxon>Oceanospirillales</taxon>
        <taxon>Oceanospirillaceae</taxon>
        <taxon>Marinomonas</taxon>
    </lineage>
</organism>
<comment type="function">
    <text evidence="1">One of the primary rRNA binding proteins, it binds directly to 16S rRNA where it nucleates assembly of the head domain of the 30S subunit. Is located at the subunit interface close to the decoding center, probably blocks exit of the E-site tRNA.</text>
</comment>
<comment type="subunit">
    <text evidence="1">Part of the 30S ribosomal subunit. Contacts proteins S9 and S11.</text>
</comment>
<comment type="similarity">
    <text evidence="1">Belongs to the universal ribosomal protein uS7 family.</text>
</comment>
<keyword id="KW-0687">Ribonucleoprotein</keyword>
<keyword id="KW-0689">Ribosomal protein</keyword>
<keyword id="KW-0694">RNA-binding</keyword>
<keyword id="KW-0699">rRNA-binding</keyword>
<keyword id="KW-0820">tRNA-binding</keyword>
<name>RS7_MARMS</name>
<proteinExistence type="inferred from homology"/>
<evidence type="ECO:0000255" key="1">
    <source>
        <dbReference type="HAMAP-Rule" id="MF_00480"/>
    </source>
</evidence>
<evidence type="ECO:0000305" key="2"/>
<gene>
    <name evidence="1" type="primary">rpsG</name>
    <name type="ordered locus">Mmwyl1_4280</name>
</gene>
<reference key="1">
    <citation type="submission" date="2007-06" db="EMBL/GenBank/DDBJ databases">
        <title>Complete sequence of Marinomonas sp. MWYL1.</title>
        <authorList>
            <consortium name="US DOE Joint Genome Institute"/>
            <person name="Copeland A."/>
            <person name="Lucas S."/>
            <person name="Lapidus A."/>
            <person name="Barry K."/>
            <person name="Glavina del Rio T."/>
            <person name="Dalin E."/>
            <person name="Tice H."/>
            <person name="Pitluck S."/>
            <person name="Kiss H."/>
            <person name="Brettin T."/>
            <person name="Bruce D."/>
            <person name="Detter J.C."/>
            <person name="Han C."/>
            <person name="Schmutz J."/>
            <person name="Larimer F."/>
            <person name="Land M."/>
            <person name="Hauser L."/>
            <person name="Kyrpides N."/>
            <person name="Kim E."/>
            <person name="Johnston A.W.B."/>
            <person name="Todd J.D."/>
            <person name="Rogers R."/>
            <person name="Wexler M."/>
            <person name="Bond P.L."/>
            <person name="Li Y."/>
            <person name="Richardson P."/>
        </authorList>
    </citation>
    <scope>NUCLEOTIDE SEQUENCE [LARGE SCALE GENOMIC DNA]</scope>
    <source>
        <strain>MWYL1</strain>
    </source>
</reference>